<protein>
    <recommendedName>
        <fullName evidence="1">Multifunctional CCA protein</fullName>
    </recommendedName>
    <domain>
        <recommendedName>
            <fullName evidence="1">CCA-adding enzyme</fullName>
            <ecNumber evidence="1">2.7.7.72</ecNumber>
        </recommendedName>
        <alternativeName>
            <fullName evidence="1">CCA tRNA nucleotidyltransferase</fullName>
        </alternativeName>
        <alternativeName>
            <fullName evidence="1">tRNA CCA-pyrophosphorylase</fullName>
        </alternativeName>
        <alternativeName>
            <fullName evidence="1">tRNA adenylyl-/cytidylyl-transferase</fullName>
        </alternativeName>
        <alternativeName>
            <fullName evidence="1">tRNA nucleotidyltransferase</fullName>
        </alternativeName>
        <alternativeName>
            <fullName evidence="1">tRNA-NT</fullName>
        </alternativeName>
    </domain>
    <domain>
        <recommendedName>
            <fullName evidence="1">2'-nucleotidase</fullName>
            <ecNumber evidence="1">3.1.3.-</ecNumber>
        </recommendedName>
    </domain>
    <domain>
        <recommendedName>
            <fullName evidence="1">2',3'-cyclic phosphodiesterase</fullName>
            <ecNumber evidence="1">3.1.4.-</ecNumber>
        </recommendedName>
    </domain>
    <domain>
        <recommendedName>
            <fullName evidence="1">Phosphatase</fullName>
            <ecNumber evidence="1">3.1.3.-</ecNumber>
        </recommendedName>
    </domain>
</protein>
<sequence length="415" mass="45708">MQVYAVGGAIRDELLGKPSQDRDYVVVGATPAEMEAAGYRPVGKDFPVFLHPRTQEEYALARTERKTAMGYKGFAFYCEPDVTLEDDLVRRDLTINAMARAVDADGNLTGPVIDPHGGQRDLAARLFRHVSDAFAEDPVRILRLARFAARFHDFNVAAETMRLMREMVAAGEVDALVPERVWQELARGLMEARPSRMFEVLRECGALARLLPELERLWGVPQRADFHPEVDTGVHVMMVIDCAAALGAPLPVRFAALVHDLGKGTTPEDVLPRHIGHELRSVRLLEEVCARLRVPNECRDLAVVVAREHGHIHRSLELGAAAVVRLLERCDALRKPARFAQALQACEADKRGRKGFEHSDYPQAARLLAAREAAASVDAGAIARACADNVAQIKDRVHAARVEAVAQRLGAQPGE</sequence>
<gene>
    <name evidence="1" type="primary">cca</name>
    <name type="ordered locus">RALTA_A0197</name>
</gene>
<comment type="function">
    <text evidence="1">Catalyzes the addition and repair of the essential 3'-terminal CCA sequence in tRNAs without using a nucleic acid template. Adds these three nucleotides in the order of C, C, and A to the tRNA nucleotide-73, using CTP and ATP as substrates and producing inorganic pyrophosphate. tRNA 3'-terminal CCA addition is required both for tRNA processing and repair. Also involved in tRNA surveillance by mediating tandem CCA addition to generate a CCACCA at the 3' terminus of unstable tRNAs. While stable tRNAs receive only 3'-terminal CCA, unstable tRNAs are marked with CCACCA and rapidly degraded.</text>
</comment>
<comment type="catalytic activity">
    <reaction evidence="1">
        <text>a tRNA precursor + 2 CTP + ATP = a tRNA with a 3' CCA end + 3 diphosphate</text>
        <dbReference type="Rhea" id="RHEA:14433"/>
        <dbReference type="Rhea" id="RHEA-COMP:10465"/>
        <dbReference type="Rhea" id="RHEA-COMP:10468"/>
        <dbReference type="ChEBI" id="CHEBI:30616"/>
        <dbReference type="ChEBI" id="CHEBI:33019"/>
        <dbReference type="ChEBI" id="CHEBI:37563"/>
        <dbReference type="ChEBI" id="CHEBI:74896"/>
        <dbReference type="ChEBI" id="CHEBI:83071"/>
        <dbReference type="EC" id="2.7.7.72"/>
    </reaction>
</comment>
<comment type="catalytic activity">
    <reaction evidence="1">
        <text>a tRNA with a 3' CCA end + 2 CTP + ATP = a tRNA with a 3' CCACCA end + 3 diphosphate</text>
        <dbReference type="Rhea" id="RHEA:76235"/>
        <dbReference type="Rhea" id="RHEA-COMP:10468"/>
        <dbReference type="Rhea" id="RHEA-COMP:18655"/>
        <dbReference type="ChEBI" id="CHEBI:30616"/>
        <dbReference type="ChEBI" id="CHEBI:33019"/>
        <dbReference type="ChEBI" id="CHEBI:37563"/>
        <dbReference type="ChEBI" id="CHEBI:83071"/>
        <dbReference type="ChEBI" id="CHEBI:195187"/>
    </reaction>
    <physiologicalReaction direction="left-to-right" evidence="1">
        <dbReference type="Rhea" id="RHEA:76236"/>
    </physiologicalReaction>
</comment>
<comment type="cofactor">
    <cofactor evidence="1">
        <name>Mg(2+)</name>
        <dbReference type="ChEBI" id="CHEBI:18420"/>
    </cofactor>
    <text evidence="1">Magnesium is required for nucleotidyltransferase activity.</text>
</comment>
<comment type="cofactor">
    <cofactor evidence="1">
        <name>Ni(2+)</name>
        <dbReference type="ChEBI" id="CHEBI:49786"/>
    </cofactor>
    <text evidence="1">Nickel for phosphatase activity.</text>
</comment>
<comment type="subunit">
    <text evidence="1">Monomer. Can also form homodimers and oligomers.</text>
</comment>
<comment type="domain">
    <text evidence="1">Comprises two domains: an N-terminal domain containing the nucleotidyltransferase activity and a C-terminal HD domain associated with both phosphodiesterase and phosphatase activities.</text>
</comment>
<comment type="miscellaneous">
    <text evidence="1">A single active site specifically recognizes both ATP and CTP and is responsible for their addition.</text>
</comment>
<comment type="similarity">
    <text evidence="1">Belongs to the tRNA nucleotidyltransferase/poly(A) polymerase family. Bacterial CCA-adding enzyme type 1 subfamily.</text>
</comment>
<evidence type="ECO:0000255" key="1">
    <source>
        <dbReference type="HAMAP-Rule" id="MF_01261"/>
    </source>
</evidence>
<feature type="chain" id="PRO_1000140029" description="Multifunctional CCA protein">
    <location>
        <begin position="1"/>
        <end position="415"/>
    </location>
</feature>
<feature type="domain" description="HD" evidence="1">
    <location>
        <begin position="232"/>
        <end position="333"/>
    </location>
</feature>
<feature type="binding site" evidence="1">
    <location>
        <position position="8"/>
    </location>
    <ligand>
        <name>ATP</name>
        <dbReference type="ChEBI" id="CHEBI:30616"/>
    </ligand>
</feature>
<feature type="binding site" evidence="1">
    <location>
        <position position="8"/>
    </location>
    <ligand>
        <name>CTP</name>
        <dbReference type="ChEBI" id="CHEBI:37563"/>
    </ligand>
</feature>
<feature type="binding site" evidence="1">
    <location>
        <position position="11"/>
    </location>
    <ligand>
        <name>ATP</name>
        <dbReference type="ChEBI" id="CHEBI:30616"/>
    </ligand>
</feature>
<feature type="binding site" evidence="1">
    <location>
        <position position="11"/>
    </location>
    <ligand>
        <name>CTP</name>
        <dbReference type="ChEBI" id="CHEBI:37563"/>
    </ligand>
</feature>
<feature type="binding site" evidence="1">
    <location>
        <position position="21"/>
    </location>
    <ligand>
        <name>Mg(2+)</name>
        <dbReference type="ChEBI" id="CHEBI:18420"/>
    </ligand>
</feature>
<feature type="binding site" evidence="1">
    <location>
        <position position="23"/>
    </location>
    <ligand>
        <name>Mg(2+)</name>
        <dbReference type="ChEBI" id="CHEBI:18420"/>
    </ligand>
</feature>
<feature type="binding site" evidence="1">
    <location>
        <position position="91"/>
    </location>
    <ligand>
        <name>ATP</name>
        <dbReference type="ChEBI" id="CHEBI:30616"/>
    </ligand>
</feature>
<feature type="binding site" evidence="1">
    <location>
        <position position="91"/>
    </location>
    <ligand>
        <name>CTP</name>
        <dbReference type="ChEBI" id="CHEBI:37563"/>
    </ligand>
</feature>
<feature type="binding site" evidence="1">
    <location>
        <position position="143"/>
    </location>
    <ligand>
        <name>ATP</name>
        <dbReference type="ChEBI" id="CHEBI:30616"/>
    </ligand>
</feature>
<feature type="binding site" evidence="1">
    <location>
        <position position="143"/>
    </location>
    <ligand>
        <name>CTP</name>
        <dbReference type="ChEBI" id="CHEBI:37563"/>
    </ligand>
</feature>
<feature type="binding site" evidence="1">
    <location>
        <position position="146"/>
    </location>
    <ligand>
        <name>ATP</name>
        <dbReference type="ChEBI" id="CHEBI:30616"/>
    </ligand>
</feature>
<feature type="binding site" evidence="1">
    <location>
        <position position="146"/>
    </location>
    <ligand>
        <name>CTP</name>
        <dbReference type="ChEBI" id="CHEBI:37563"/>
    </ligand>
</feature>
<organism>
    <name type="scientific">Cupriavidus taiwanensis (strain DSM 17343 / BCRC 17206 / CCUG 44338 / CIP 107171 / LMG 19424 / R1)</name>
    <name type="common">Ralstonia taiwanensis (strain LMG 19424)</name>
    <dbReference type="NCBI Taxonomy" id="977880"/>
    <lineage>
        <taxon>Bacteria</taxon>
        <taxon>Pseudomonadati</taxon>
        <taxon>Pseudomonadota</taxon>
        <taxon>Betaproteobacteria</taxon>
        <taxon>Burkholderiales</taxon>
        <taxon>Burkholderiaceae</taxon>
        <taxon>Cupriavidus</taxon>
    </lineage>
</organism>
<reference key="1">
    <citation type="journal article" date="2008" name="Genome Res.">
        <title>Genome sequence of the beta-rhizobium Cupriavidus taiwanensis and comparative genomics of rhizobia.</title>
        <authorList>
            <person name="Amadou C."/>
            <person name="Pascal G."/>
            <person name="Mangenot S."/>
            <person name="Glew M."/>
            <person name="Bontemps C."/>
            <person name="Capela D."/>
            <person name="Carrere S."/>
            <person name="Cruveiller S."/>
            <person name="Dossat C."/>
            <person name="Lajus A."/>
            <person name="Marchetti M."/>
            <person name="Poinsot V."/>
            <person name="Rouy Z."/>
            <person name="Servin B."/>
            <person name="Saad M."/>
            <person name="Schenowitz C."/>
            <person name="Barbe V."/>
            <person name="Batut J."/>
            <person name="Medigue C."/>
            <person name="Masson-Boivin C."/>
        </authorList>
    </citation>
    <scope>NUCLEOTIDE SEQUENCE [LARGE SCALE GENOMIC DNA]</scope>
    <source>
        <strain>DSM 17343 / BCRC 17206 / CCUG 44338 / CIP 107171 / LMG 19424 / R1</strain>
    </source>
</reference>
<accession>B2AGH1</accession>
<name>CCA_CUPTR</name>
<dbReference type="EC" id="2.7.7.72" evidence="1"/>
<dbReference type="EC" id="3.1.3.-" evidence="1"/>
<dbReference type="EC" id="3.1.4.-" evidence="1"/>
<dbReference type="EMBL" id="CU633749">
    <property type="protein sequence ID" value="CAP62870.1"/>
    <property type="molecule type" value="Genomic_DNA"/>
</dbReference>
<dbReference type="RefSeq" id="WP_012351538.1">
    <property type="nucleotide sequence ID" value="NC_010528.1"/>
</dbReference>
<dbReference type="SMR" id="B2AGH1"/>
<dbReference type="GeneID" id="29763042"/>
<dbReference type="KEGG" id="cti:RALTA_A0197"/>
<dbReference type="eggNOG" id="COG0617">
    <property type="taxonomic scope" value="Bacteria"/>
</dbReference>
<dbReference type="HOGENOM" id="CLU_015961_1_1_4"/>
<dbReference type="BioCyc" id="CTAI977880:RALTA_RS00975-MONOMER"/>
<dbReference type="Proteomes" id="UP000001692">
    <property type="component" value="Chromosome 1"/>
</dbReference>
<dbReference type="GO" id="GO:0005524">
    <property type="term" value="F:ATP binding"/>
    <property type="evidence" value="ECO:0007669"/>
    <property type="project" value="UniProtKB-UniRule"/>
</dbReference>
<dbReference type="GO" id="GO:0004810">
    <property type="term" value="F:CCA tRNA nucleotidyltransferase activity"/>
    <property type="evidence" value="ECO:0007669"/>
    <property type="project" value="UniProtKB-UniRule"/>
</dbReference>
<dbReference type="GO" id="GO:0004112">
    <property type="term" value="F:cyclic-nucleotide phosphodiesterase activity"/>
    <property type="evidence" value="ECO:0007669"/>
    <property type="project" value="UniProtKB-UniRule"/>
</dbReference>
<dbReference type="GO" id="GO:0000287">
    <property type="term" value="F:magnesium ion binding"/>
    <property type="evidence" value="ECO:0007669"/>
    <property type="project" value="UniProtKB-UniRule"/>
</dbReference>
<dbReference type="GO" id="GO:0016791">
    <property type="term" value="F:phosphatase activity"/>
    <property type="evidence" value="ECO:0007669"/>
    <property type="project" value="UniProtKB-UniRule"/>
</dbReference>
<dbReference type="GO" id="GO:0000049">
    <property type="term" value="F:tRNA binding"/>
    <property type="evidence" value="ECO:0007669"/>
    <property type="project" value="UniProtKB-UniRule"/>
</dbReference>
<dbReference type="GO" id="GO:0042245">
    <property type="term" value="P:RNA repair"/>
    <property type="evidence" value="ECO:0007669"/>
    <property type="project" value="UniProtKB-KW"/>
</dbReference>
<dbReference type="GO" id="GO:0001680">
    <property type="term" value="P:tRNA 3'-terminal CCA addition"/>
    <property type="evidence" value="ECO:0007669"/>
    <property type="project" value="UniProtKB-UniRule"/>
</dbReference>
<dbReference type="CDD" id="cd00077">
    <property type="entry name" value="HDc"/>
    <property type="match status" value="1"/>
</dbReference>
<dbReference type="CDD" id="cd05398">
    <property type="entry name" value="NT_ClassII-CCAase"/>
    <property type="match status" value="1"/>
</dbReference>
<dbReference type="Gene3D" id="3.30.460.10">
    <property type="entry name" value="Beta Polymerase, domain 2"/>
    <property type="match status" value="1"/>
</dbReference>
<dbReference type="Gene3D" id="1.10.3090.10">
    <property type="entry name" value="cca-adding enzyme, domain 2"/>
    <property type="match status" value="1"/>
</dbReference>
<dbReference type="HAMAP" id="MF_01261">
    <property type="entry name" value="CCA_bact_type1"/>
    <property type="match status" value="1"/>
</dbReference>
<dbReference type="InterPro" id="IPR012006">
    <property type="entry name" value="CCA_bact"/>
</dbReference>
<dbReference type="InterPro" id="IPR003607">
    <property type="entry name" value="HD/PDEase_dom"/>
</dbReference>
<dbReference type="InterPro" id="IPR006674">
    <property type="entry name" value="HD_domain"/>
</dbReference>
<dbReference type="InterPro" id="IPR043519">
    <property type="entry name" value="NT_sf"/>
</dbReference>
<dbReference type="InterPro" id="IPR002646">
    <property type="entry name" value="PolA_pol_head_dom"/>
</dbReference>
<dbReference type="InterPro" id="IPR032828">
    <property type="entry name" value="PolyA_RNA-bd"/>
</dbReference>
<dbReference type="InterPro" id="IPR050124">
    <property type="entry name" value="tRNA_CCA-adding_enzyme"/>
</dbReference>
<dbReference type="NCBIfam" id="NF008137">
    <property type="entry name" value="PRK10885.1"/>
    <property type="match status" value="1"/>
</dbReference>
<dbReference type="PANTHER" id="PTHR47545">
    <property type="entry name" value="MULTIFUNCTIONAL CCA PROTEIN"/>
    <property type="match status" value="1"/>
</dbReference>
<dbReference type="PANTHER" id="PTHR47545:SF1">
    <property type="entry name" value="MULTIFUNCTIONAL CCA PROTEIN"/>
    <property type="match status" value="1"/>
</dbReference>
<dbReference type="Pfam" id="PF01966">
    <property type="entry name" value="HD"/>
    <property type="match status" value="1"/>
</dbReference>
<dbReference type="Pfam" id="PF01743">
    <property type="entry name" value="PolyA_pol"/>
    <property type="match status" value="1"/>
</dbReference>
<dbReference type="Pfam" id="PF12627">
    <property type="entry name" value="PolyA_pol_RNAbd"/>
    <property type="match status" value="1"/>
</dbReference>
<dbReference type="PIRSF" id="PIRSF000813">
    <property type="entry name" value="CCA_bact"/>
    <property type="match status" value="1"/>
</dbReference>
<dbReference type="SUPFAM" id="SSF81301">
    <property type="entry name" value="Nucleotidyltransferase"/>
    <property type="match status" value="1"/>
</dbReference>
<dbReference type="SUPFAM" id="SSF81891">
    <property type="entry name" value="Poly A polymerase C-terminal region-like"/>
    <property type="match status" value="1"/>
</dbReference>
<dbReference type="PROSITE" id="PS51831">
    <property type="entry name" value="HD"/>
    <property type="match status" value="1"/>
</dbReference>
<keyword id="KW-0067">ATP-binding</keyword>
<keyword id="KW-0378">Hydrolase</keyword>
<keyword id="KW-0460">Magnesium</keyword>
<keyword id="KW-0479">Metal-binding</keyword>
<keyword id="KW-0511">Multifunctional enzyme</keyword>
<keyword id="KW-0533">Nickel</keyword>
<keyword id="KW-0547">Nucleotide-binding</keyword>
<keyword id="KW-0548">Nucleotidyltransferase</keyword>
<keyword id="KW-0692">RNA repair</keyword>
<keyword id="KW-0694">RNA-binding</keyword>
<keyword id="KW-0808">Transferase</keyword>
<keyword id="KW-0819">tRNA processing</keyword>
<proteinExistence type="inferred from homology"/>